<accession>Q7W7C6</accession>
<evidence type="ECO:0000255" key="1">
    <source>
        <dbReference type="HAMAP-Rule" id="MF_00283"/>
    </source>
</evidence>
<organism>
    <name type="scientific">Bordetella parapertussis (strain 12822 / ATCC BAA-587 / NCTC 13253)</name>
    <dbReference type="NCBI Taxonomy" id="257311"/>
    <lineage>
        <taxon>Bacteria</taxon>
        <taxon>Pseudomonadati</taxon>
        <taxon>Pseudomonadota</taxon>
        <taxon>Betaproteobacteria</taxon>
        <taxon>Burkholderiales</taxon>
        <taxon>Alcaligenaceae</taxon>
        <taxon>Bordetella</taxon>
    </lineage>
</organism>
<dbReference type="EC" id="6.1.1.20" evidence="1"/>
<dbReference type="EMBL" id="BX640431">
    <property type="protein sequence ID" value="CAE37891.1"/>
    <property type="molecule type" value="Genomic_DNA"/>
</dbReference>
<dbReference type="RefSeq" id="WP_010928624.1">
    <property type="nucleotide sequence ID" value="NC_002928.3"/>
</dbReference>
<dbReference type="SMR" id="Q7W7C6"/>
<dbReference type="GeneID" id="93204382"/>
<dbReference type="KEGG" id="bpa:BPP2599"/>
<dbReference type="HOGENOM" id="CLU_016891_0_0_4"/>
<dbReference type="Proteomes" id="UP000001421">
    <property type="component" value="Chromosome"/>
</dbReference>
<dbReference type="GO" id="GO:0009328">
    <property type="term" value="C:phenylalanine-tRNA ligase complex"/>
    <property type="evidence" value="ECO:0007669"/>
    <property type="project" value="TreeGrafter"/>
</dbReference>
<dbReference type="GO" id="GO:0005524">
    <property type="term" value="F:ATP binding"/>
    <property type="evidence" value="ECO:0007669"/>
    <property type="project" value="UniProtKB-UniRule"/>
</dbReference>
<dbReference type="GO" id="GO:0000287">
    <property type="term" value="F:magnesium ion binding"/>
    <property type="evidence" value="ECO:0007669"/>
    <property type="project" value="UniProtKB-UniRule"/>
</dbReference>
<dbReference type="GO" id="GO:0004826">
    <property type="term" value="F:phenylalanine-tRNA ligase activity"/>
    <property type="evidence" value="ECO:0007669"/>
    <property type="project" value="UniProtKB-UniRule"/>
</dbReference>
<dbReference type="GO" id="GO:0000049">
    <property type="term" value="F:tRNA binding"/>
    <property type="evidence" value="ECO:0007669"/>
    <property type="project" value="UniProtKB-KW"/>
</dbReference>
<dbReference type="GO" id="GO:0006432">
    <property type="term" value="P:phenylalanyl-tRNA aminoacylation"/>
    <property type="evidence" value="ECO:0007669"/>
    <property type="project" value="UniProtKB-UniRule"/>
</dbReference>
<dbReference type="CDD" id="cd00769">
    <property type="entry name" value="PheRS_beta_core"/>
    <property type="match status" value="1"/>
</dbReference>
<dbReference type="CDD" id="cd02796">
    <property type="entry name" value="tRNA_bind_bactPheRS"/>
    <property type="match status" value="1"/>
</dbReference>
<dbReference type="FunFam" id="2.40.50.140:FF:000045">
    <property type="entry name" value="Phenylalanine--tRNA ligase beta subunit"/>
    <property type="match status" value="1"/>
</dbReference>
<dbReference type="FunFam" id="3.30.56.10:FF:000002">
    <property type="entry name" value="Phenylalanine--tRNA ligase beta subunit"/>
    <property type="match status" value="1"/>
</dbReference>
<dbReference type="FunFam" id="3.30.930.10:FF:000022">
    <property type="entry name" value="Phenylalanine--tRNA ligase beta subunit"/>
    <property type="match status" value="1"/>
</dbReference>
<dbReference type="Gene3D" id="3.30.56.10">
    <property type="match status" value="2"/>
</dbReference>
<dbReference type="Gene3D" id="3.30.930.10">
    <property type="entry name" value="Bira Bifunctional Protein, Domain 2"/>
    <property type="match status" value="1"/>
</dbReference>
<dbReference type="Gene3D" id="3.30.70.380">
    <property type="entry name" value="Ferrodoxin-fold anticodon-binding domain"/>
    <property type="match status" value="1"/>
</dbReference>
<dbReference type="Gene3D" id="2.40.50.140">
    <property type="entry name" value="Nucleic acid-binding proteins"/>
    <property type="match status" value="1"/>
</dbReference>
<dbReference type="Gene3D" id="3.50.40.10">
    <property type="entry name" value="Phenylalanyl-trna Synthetase, Chain B, domain 3"/>
    <property type="match status" value="1"/>
</dbReference>
<dbReference type="HAMAP" id="MF_00283">
    <property type="entry name" value="Phe_tRNA_synth_beta1"/>
    <property type="match status" value="1"/>
</dbReference>
<dbReference type="InterPro" id="IPR045864">
    <property type="entry name" value="aa-tRNA-synth_II/BPL/LPL"/>
</dbReference>
<dbReference type="InterPro" id="IPR005146">
    <property type="entry name" value="B3/B4_tRNA-bd"/>
</dbReference>
<dbReference type="InterPro" id="IPR009061">
    <property type="entry name" value="DNA-bd_dom_put_sf"/>
</dbReference>
<dbReference type="InterPro" id="IPR005121">
    <property type="entry name" value="Fdx_antiC-bd"/>
</dbReference>
<dbReference type="InterPro" id="IPR036690">
    <property type="entry name" value="Fdx_antiC-bd_sf"/>
</dbReference>
<dbReference type="InterPro" id="IPR012340">
    <property type="entry name" value="NA-bd_OB-fold"/>
</dbReference>
<dbReference type="InterPro" id="IPR045060">
    <property type="entry name" value="Phe-tRNA-ligase_IIc_bsu"/>
</dbReference>
<dbReference type="InterPro" id="IPR004532">
    <property type="entry name" value="Phe-tRNA-ligase_IIc_bsu_bact"/>
</dbReference>
<dbReference type="InterPro" id="IPR020825">
    <property type="entry name" value="Phe-tRNA_synthase-like_B3/B4"/>
</dbReference>
<dbReference type="InterPro" id="IPR041616">
    <property type="entry name" value="PheRS_beta_core"/>
</dbReference>
<dbReference type="InterPro" id="IPR002547">
    <property type="entry name" value="tRNA-bd_dom"/>
</dbReference>
<dbReference type="InterPro" id="IPR033714">
    <property type="entry name" value="tRNA_bind_bactPheRS"/>
</dbReference>
<dbReference type="InterPro" id="IPR005147">
    <property type="entry name" value="tRNA_synthase_B5-dom"/>
</dbReference>
<dbReference type="NCBIfam" id="TIGR00472">
    <property type="entry name" value="pheT_bact"/>
    <property type="match status" value="1"/>
</dbReference>
<dbReference type="NCBIfam" id="NF045760">
    <property type="entry name" value="YtpR"/>
    <property type="match status" value="1"/>
</dbReference>
<dbReference type="PANTHER" id="PTHR10947:SF0">
    <property type="entry name" value="PHENYLALANINE--TRNA LIGASE BETA SUBUNIT"/>
    <property type="match status" value="1"/>
</dbReference>
<dbReference type="PANTHER" id="PTHR10947">
    <property type="entry name" value="PHENYLALANYL-TRNA SYNTHETASE BETA CHAIN AND LEUCINE-RICH REPEAT-CONTAINING PROTEIN 47"/>
    <property type="match status" value="1"/>
</dbReference>
<dbReference type="Pfam" id="PF03483">
    <property type="entry name" value="B3_4"/>
    <property type="match status" value="1"/>
</dbReference>
<dbReference type="Pfam" id="PF03484">
    <property type="entry name" value="B5"/>
    <property type="match status" value="1"/>
</dbReference>
<dbReference type="Pfam" id="PF03147">
    <property type="entry name" value="FDX-ACB"/>
    <property type="match status" value="1"/>
</dbReference>
<dbReference type="Pfam" id="PF01588">
    <property type="entry name" value="tRNA_bind"/>
    <property type="match status" value="1"/>
</dbReference>
<dbReference type="Pfam" id="PF17759">
    <property type="entry name" value="tRNA_synthFbeta"/>
    <property type="match status" value="1"/>
</dbReference>
<dbReference type="SMART" id="SM00873">
    <property type="entry name" value="B3_4"/>
    <property type="match status" value="1"/>
</dbReference>
<dbReference type="SMART" id="SM00874">
    <property type="entry name" value="B5"/>
    <property type="match status" value="1"/>
</dbReference>
<dbReference type="SMART" id="SM00896">
    <property type="entry name" value="FDX-ACB"/>
    <property type="match status" value="1"/>
</dbReference>
<dbReference type="SUPFAM" id="SSF54991">
    <property type="entry name" value="Anticodon-binding domain of PheRS"/>
    <property type="match status" value="1"/>
</dbReference>
<dbReference type="SUPFAM" id="SSF55681">
    <property type="entry name" value="Class II aaRS and biotin synthetases"/>
    <property type="match status" value="1"/>
</dbReference>
<dbReference type="SUPFAM" id="SSF50249">
    <property type="entry name" value="Nucleic acid-binding proteins"/>
    <property type="match status" value="1"/>
</dbReference>
<dbReference type="SUPFAM" id="SSF56037">
    <property type="entry name" value="PheT/TilS domain"/>
    <property type="match status" value="1"/>
</dbReference>
<dbReference type="SUPFAM" id="SSF46955">
    <property type="entry name" value="Putative DNA-binding domain"/>
    <property type="match status" value="1"/>
</dbReference>
<dbReference type="PROSITE" id="PS51483">
    <property type="entry name" value="B5"/>
    <property type="match status" value="1"/>
</dbReference>
<dbReference type="PROSITE" id="PS51447">
    <property type="entry name" value="FDX_ACB"/>
    <property type="match status" value="1"/>
</dbReference>
<dbReference type="PROSITE" id="PS50886">
    <property type="entry name" value="TRBD"/>
    <property type="match status" value="1"/>
</dbReference>
<sequence length="805" mass="88004">MQFPESWLRSLVNPSIGTDELAHRLTMAGLEVEETEPAAPPFTGVVVARIVDIAPHPDADKLRVCQVDDGSGALLQIVCGAPNAAAGLTVPLARVGAELPGGMKIGVAKMRGVQSSGMLCSARELGLSQDHAGLLELPAALRPGTDIRAALDLDDTLFTLKLTPNRADCLSIFGVAREVAALTGTPLTAPAAEPVPVTIDHRLPVAIQAPDLCGRFAGRVIQGVNARAATPEWMKTRLERAGQRSVSALVDISNYVMLEVGRPSHVFDLDKIGGDLSVRWAREGETLELLNGQAVALDPKVGVVVAGEQVESLAGIMGGEATSVTLDTRNIYLEAAFWWPGAIAGRARRYKFSSEASHRFERGVDYASIPEHIELITRLILDICGGQAGPVDDQCVNLPVREPVRMRLARCHRVLGVAVERAEVAQIFTRLGLPFQEQGDDFVVTPPSYRFDIEIEEDLIEEVARVYGFERIPDVPPVARAKMHAQPEARRGAHAVRRLVAARDYQEVVNYSFVEAAWERDYAGNDNLVRLVNPIASHLSVMRSSLIAGLVAIVRHNANRKQSRVRLFELGRVFHRDPQLADGPLEVAGVRQPLMLAGVAWGGAVEEQWGVPHRQVDFYDVKQDVEALFGARADALRFVADRYPALHPGRSARIELDGQPIGWLGELHPQWTQQADLHHAPVVFELDFEALAERRLPAVRELSRQPAVVRDLALWVDAKLPAQAMLDTVAAAIARDPQLSVVQDAQVFDVWREKPVAGQTVTEKSLAFRFWLQDTEVTLDEARVADCIARIKDALVAAHNARQRA</sequence>
<name>SYFB_BORPA</name>
<keyword id="KW-0030">Aminoacyl-tRNA synthetase</keyword>
<keyword id="KW-0067">ATP-binding</keyword>
<keyword id="KW-0963">Cytoplasm</keyword>
<keyword id="KW-0436">Ligase</keyword>
<keyword id="KW-0460">Magnesium</keyword>
<keyword id="KW-0479">Metal-binding</keyword>
<keyword id="KW-0547">Nucleotide-binding</keyword>
<keyword id="KW-0648">Protein biosynthesis</keyword>
<keyword id="KW-0694">RNA-binding</keyword>
<keyword id="KW-0820">tRNA-binding</keyword>
<reference key="1">
    <citation type="journal article" date="2003" name="Nat. Genet.">
        <title>Comparative analysis of the genome sequences of Bordetella pertussis, Bordetella parapertussis and Bordetella bronchiseptica.</title>
        <authorList>
            <person name="Parkhill J."/>
            <person name="Sebaihia M."/>
            <person name="Preston A."/>
            <person name="Murphy L.D."/>
            <person name="Thomson N.R."/>
            <person name="Harris D.E."/>
            <person name="Holden M.T.G."/>
            <person name="Churcher C.M."/>
            <person name="Bentley S.D."/>
            <person name="Mungall K.L."/>
            <person name="Cerdeno-Tarraga A.-M."/>
            <person name="Temple L."/>
            <person name="James K.D."/>
            <person name="Harris B."/>
            <person name="Quail M.A."/>
            <person name="Achtman M."/>
            <person name="Atkin R."/>
            <person name="Baker S."/>
            <person name="Basham D."/>
            <person name="Bason N."/>
            <person name="Cherevach I."/>
            <person name="Chillingworth T."/>
            <person name="Collins M."/>
            <person name="Cronin A."/>
            <person name="Davis P."/>
            <person name="Doggett J."/>
            <person name="Feltwell T."/>
            <person name="Goble A."/>
            <person name="Hamlin N."/>
            <person name="Hauser H."/>
            <person name="Holroyd S."/>
            <person name="Jagels K."/>
            <person name="Leather S."/>
            <person name="Moule S."/>
            <person name="Norberczak H."/>
            <person name="O'Neil S."/>
            <person name="Ormond D."/>
            <person name="Price C."/>
            <person name="Rabbinowitsch E."/>
            <person name="Rutter S."/>
            <person name="Sanders M."/>
            <person name="Saunders D."/>
            <person name="Seeger K."/>
            <person name="Sharp S."/>
            <person name="Simmonds M."/>
            <person name="Skelton J."/>
            <person name="Squares R."/>
            <person name="Squares S."/>
            <person name="Stevens K."/>
            <person name="Unwin L."/>
            <person name="Whitehead S."/>
            <person name="Barrell B.G."/>
            <person name="Maskell D.J."/>
        </authorList>
    </citation>
    <scope>NUCLEOTIDE SEQUENCE [LARGE SCALE GENOMIC DNA]</scope>
    <source>
        <strain>12822 / ATCC BAA-587 / NCTC 13253</strain>
    </source>
</reference>
<comment type="catalytic activity">
    <reaction evidence="1">
        <text>tRNA(Phe) + L-phenylalanine + ATP = L-phenylalanyl-tRNA(Phe) + AMP + diphosphate + H(+)</text>
        <dbReference type="Rhea" id="RHEA:19413"/>
        <dbReference type="Rhea" id="RHEA-COMP:9668"/>
        <dbReference type="Rhea" id="RHEA-COMP:9699"/>
        <dbReference type="ChEBI" id="CHEBI:15378"/>
        <dbReference type="ChEBI" id="CHEBI:30616"/>
        <dbReference type="ChEBI" id="CHEBI:33019"/>
        <dbReference type="ChEBI" id="CHEBI:58095"/>
        <dbReference type="ChEBI" id="CHEBI:78442"/>
        <dbReference type="ChEBI" id="CHEBI:78531"/>
        <dbReference type="ChEBI" id="CHEBI:456215"/>
        <dbReference type="EC" id="6.1.1.20"/>
    </reaction>
</comment>
<comment type="cofactor">
    <cofactor evidence="1">
        <name>Mg(2+)</name>
        <dbReference type="ChEBI" id="CHEBI:18420"/>
    </cofactor>
    <text evidence="1">Binds 2 magnesium ions per tetramer.</text>
</comment>
<comment type="subunit">
    <text evidence="1">Tetramer of two alpha and two beta subunits.</text>
</comment>
<comment type="subcellular location">
    <subcellularLocation>
        <location evidence="1">Cytoplasm</location>
    </subcellularLocation>
</comment>
<comment type="similarity">
    <text evidence="1">Belongs to the phenylalanyl-tRNA synthetase beta subunit family. Type 1 subfamily.</text>
</comment>
<feature type="chain" id="PRO_0000126851" description="Phenylalanine--tRNA ligase beta subunit">
    <location>
        <begin position="1"/>
        <end position="805"/>
    </location>
</feature>
<feature type="domain" description="tRNA-binding" evidence="1">
    <location>
        <begin position="39"/>
        <end position="148"/>
    </location>
</feature>
<feature type="domain" description="B5" evidence="1">
    <location>
        <begin position="399"/>
        <end position="474"/>
    </location>
</feature>
<feature type="domain" description="FDX-ACB" evidence="1">
    <location>
        <begin position="703"/>
        <end position="804"/>
    </location>
</feature>
<feature type="binding site" evidence="1">
    <location>
        <position position="452"/>
    </location>
    <ligand>
        <name>Mg(2+)</name>
        <dbReference type="ChEBI" id="CHEBI:18420"/>
        <note>shared with alpha subunit</note>
    </ligand>
</feature>
<feature type="binding site" evidence="1">
    <location>
        <position position="458"/>
    </location>
    <ligand>
        <name>Mg(2+)</name>
        <dbReference type="ChEBI" id="CHEBI:18420"/>
        <note>shared with alpha subunit</note>
    </ligand>
</feature>
<feature type="binding site" evidence="1">
    <location>
        <position position="461"/>
    </location>
    <ligand>
        <name>Mg(2+)</name>
        <dbReference type="ChEBI" id="CHEBI:18420"/>
        <note>shared with alpha subunit</note>
    </ligand>
</feature>
<feature type="binding site" evidence="1">
    <location>
        <position position="462"/>
    </location>
    <ligand>
        <name>Mg(2+)</name>
        <dbReference type="ChEBI" id="CHEBI:18420"/>
        <note>shared with alpha subunit</note>
    </ligand>
</feature>
<proteinExistence type="inferred from homology"/>
<gene>
    <name evidence="1" type="primary">pheT</name>
    <name type="ordered locus">BPP2599</name>
</gene>
<protein>
    <recommendedName>
        <fullName evidence="1">Phenylalanine--tRNA ligase beta subunit</fullName>
        <ecNumber evidence="1">6.1.1.20</ecNumber>
    </recommendedName>
    <alternativeName>
        <fullName evidence="1">Phenylalanyl-tRNA synthetase beta subunit</fullName>
        <shortName evidence="1">PheRS</shortName>
    </alternativeName>
</protein>